<sequence>MPRKALIAKQQRKQKYRTREYNRCQRCGRARAYYRKFGLCRICLRELAHEGKIPGVKKASW</sequence>
<gene>
    <name evidence="1" type="primary">rpsZ</name>
    <name evidence="1" type="synonym">rpsN</name>
    <name type="ordered locus">Rxyl_2142</name>
</gene>
<accession>Q1AU42</accession>
<feature type="chain" id="PRO_0000269131" description="Small ribosomal subunit protein uS14">
    <location>
        <begin position="1"/>
        <end position="61"/>
    </location>
</feature>
<feature type="binding site" evidence="1">
    <location>
        <position position="24"/>
    </location>
    <ligand>
        <name>Zn(2+)</name>
        <dbReference type="ChEBI" id="CHEBI:29105"/>
    </ligand>
</feature>
<feature type="binding site" evidence="1">
    <location>
        <position position="27"/>
    </location>
    <ligand>
        <name>Zn(2+)</name>
        <dbReference type="ChEBI" id="CHEBI:29105"/>
    </ligand>
</feature>
<feature type="binding site" evidence="1">
    <location>
        <position position="40"/>
    </location>
    <ligand>
        <name>Zn(2+)</name>
        <dbReference type="ChEBI" id="CHEBI:29105"/>
    </ligand>
</feature>
<feature type="binding site" evidence="1">
    <location>
        <position position="43"/>
    </location>
    <ligand>
        <name>Zn(2+)</name>
        <dbReference type="ChEBI" id="CHEBI:29105"/>
    </ligand>
</feature>
<reference key="1">
    <citation type="submission" date="2006-06" db="EMBL/GenBank/DDBJ databases">
        <title>Complete sequence of Rubrobacter xylanophilus DSM 9941.</title>
        <authorList>
            <consortium name="US DOE Joint Genome Institute"/>
            <person name="Copeland A."/>
            <person name="Lucas S."/>
            <person name="Lapidus A."/>
            <person name="Barry K."/>
            <person name="Detter J.C."/>
            <person name="Glavina del Rio T."/>
            <person name="Hammon N."/>
            <person name="Israni S."/>
            <person name="Dalin E."/>
            <person name="Tice H."/>
            <person name="Pitluck S."/>
            <person name="Munk A.C."/>
            <person name="Brettin T."/>
            <person name="Bruce D."/>
            <person name="Han C."/>
            <person name="Tapia R."/>
            <person name="Gilna P."/>
            <person name="Schmutz J."/>
            <person name="Larimer F."/>
            <person name="Land M."/>
            <person name="Hauser L."/>
            <person name="Kyrpides N."/>
            <person name="Lykidis A."/>
            <person name="da Costa M.S."/>
            <person name="Rainey F.A."/>
            <person name="Empadinhas N."/>
            <person name="Jolivet E."/>
            <person name="Battista J.R."/>
            <person name="Richardson P."/>
        </authorList>
    </citation>
    <scope>NUCLEOTIDE SEQUENCE [LARGE SCALE GENOMIC DNA]</scope>
    <source>
        <strain>DSM 9941 / JCM 11954 / NBRC 16129 / PRD-1</strain>
    </source>
</reference>
<keyword id="KW-0479">Metal-binding</keyword>
<keyword id="KW-1185">Reference proteome</keyword>
<keyword id="KW-0687">Ribonucleoprotein</keyword>
<keyword id="KW-0689">Ribosomal protein</keyword>
<keyword id="KW-0694">RNA-binding</keyword>
<keyword id="KW-0699">rRNA-binding</keyword>
<keyword id="KW-0862">Zinc</keyword>
<comment type="function">
    <text evidence="1">Binds 16S rRNA, required for the assembly of 30S particles and may also be responsible for determining the conformation of the 16S rRNA at the A site.</text>
</comment>
<comment type="cofactor">
    <cofactor evidence="1">
        <name>Zn(2+)</name>
        <dbReference type="ChEBI" id="CHEBI:29105"/>
    </cofactor>
    <text evidence="1">Binds 1 zinc ion per subunit.</text>
</comment>
<comment type="subunit">
    <text evidence="1">Part of the 30S ribosomal subunit. Contacts proteins S3 and S10.</text>
</comment>
<comment type="similarity">
    <text evidence="1">Belongs to the universal ribosomal protein uS14 family. Zinc-binding uS14 subfamily.</text>
</comment>
<dbReference type="EMBL" id="CP000386">
    <property type="protein sequence ID" value="ABG05086.1"/>
    <property type="molecule type" value="Genomic_DNA"/>
</dbReference>
<dbReference type="RefSeq" id="WP_011565101.1">
    <property type="nucleotide sequence ID" value="NC_008148.1"/>
</dbReference>
<dbReference type="SMR" id="Q1AU42"/>
<dbReference type="STRING" id="266117.Rxyl_2142"/>
<dbReference type="KEGG" id="rxy:Rxyl_2142"/>
<dbReference type="eggNOG" id="COG0199">
    <property type="taxonomic scope" value="Bacteria"/>
</dbReference>
<dbReference type="HOGENOM" id="CLU_139869_3_0_11"/>
<dbReference type="OrthoDB" id="9810484at2"/>
<dbReference type="PhylomeDB" id="Q1AU42"/>
<dbReference type="Proteomes" id="UP000006637">
    <property type="component" value="Chromosome"/>
</dbReference>
<dbReference type="GO" id="GO:0005737">
    <property type="term" value="C:cytoplasm"/>
    <property type="evidence" value="ECO:0007669"/>
    <property type="project" value="UniProtKB-ARBA"/>
</dbReference>
<dbReference type="GO" id="GO:0015935">
    <property type="term" value="C:small ribosomal subunit"/>
    <property type="evidence" value="ECO:0007669"/>
    <property type="project" value="TreeGrafter"/>
</dbReference>
<dbReference type="GO" id="GO:0019843">
    <property type="term" value="F:rRNA binding"/>
    <property type="evidence" value="ECO:0007669"/>
    <property type="project" value="UniProtKB-UniRule"/>
</dbReference>
<dbReference type="GO" id="GO:0003735">
    <property type="term" value="F:structural constituent of ribosome"/>
    <property type="evidence" value="ECO:0007669"/>
    <property type="project" value="InterPro"/>
</dbReference>
<dbReference type="GO" id="GO:0008270">
    <property type="term" value="F:zinc ion binding"/>
    <property type="evidence" value="ECO:0007669"/>
    <property type="project" value="UniProtKB-UniRule"/>
</dbReference>
<dbReference type="GO" id="GO:0006412">
    <property type="term" value="P:translation"/>
    <property type="evidence" value="ECO:0007669"/>
    <property type="project" value="UniProtKB-UniRule"/>
</dbReference>
<dbReference type="FunFam" id="4.10.830.10:FF:000001">
    <property type="entry name" value="30S ribosomal protein S14 type Z"/>
    <property type="match status" value="1"/>
</dbReference>
<dbReference type="Gene3D" id="4.10.830.10">
    <property type="entry name" value="30s Ribosomal Protein S14, Chain N"/>
    <property type="match status" value="1"/>
</dbReference>
<dbReference type="HAMAP" id="MF_01364_B">
    <property type="entry name" value="Ribosomal_uS14_2_B"/>
    <property type="match status" value="1"/>
</dbReference>
<dbReference type="InterPro" id="IPR001209">
    <property type="entry name" value="Ribosomal_uS14"/>
</dbReference>
<dbReference type="InterPro" id="IPR023053">
    <property type="entry name" value="Ribosomal_uS14_bact"/>
</dbReference>
<dbReference type="InterPro" id="IPR018271">
    <property type="entry name" value="Ribosomal_uS14_CS"/>
</dbReference>
<dbReference type="InterPro" id="IPR043140">
    <property type="entry name" value="Ribosomal_uS14_sf"/>
</dbReference>
<dbReference type="NCBIfam" id="NF005974">
    <property type="entry name" value="PRK08061.1"/>
    <property type="match status" value="1"/>
</dbReference>
<dbReference type="PANTHER" id="PTHR19836">
    <property type="entry name" value="30S RIBOSOMAL PROTEIN S14"/>
    <property type="match status" value="1"/>
</dbReference>
<dbReference type="PANTHER" id="PTHR19836:SF19">
    <property type="entry name" value="SMALL RIBOSOMAL SUBUNIT PROTEIN US14M"/>
    <property type="match status" value="1"/>
</dbReference>
<dbReference type="Pfam" id="PF00253">
    <property type="entry name" value="Ribosomal_S14"/>
    <property type="match status" value="1"/>
</dbReference>
<dbReference type="SUPFAM" id="SSF57716">
    <property type="entry name" value="Glucocorticoid receptor-like (DNA-binding domain)"/>
    <property type="match status" value="1"/>
</dbReference>
<dbReference type="PROSITE" id="PS00527">
    <property type="entry name" value="RIBOSOMAL_S14"/>
    <property type="match status" value="1"/>
</dbReference>
<protein>
    <recommendedName>
        <fullName evidence="1">Small ribosomal subunit protein uS14</fullName>
    </recommendedName>
    <alternativeName>
        <fullName evidence="2">30S ribosomal protein S14 type Z</fullName>
    </alternativeName>
</protein>
<organism>
    <name type="scientific">Rubrobacter xylanophilus (strain DSM 9941 / JCM 11954 / NBRC 16129 / PRD-1)</name>
    <dbReference type="NCBI Taxonomy" id="266117"/>
    <lineage>
        <taxon>Bacteria</taxon>
        <taxon>Bacillati</taxon>
        <taxon>Actinomycetota</taxon>
        <taxon>Rubrobacteria</taxon>
        <taxon>Rubrobacterales</taxon>
        <taxon>Rubrobacteraceae</taxon>
        <taxon>Rubrobacter</taxon>
    </lineage>
</organism>
<evidence type="ECO:0000255" key="1">
    <source>
        <dbReference type="HAMAP-Rule" id="MF_01364"/>
    </source>
</evidence>
<evidence type="ECO:0000305" key="2"/>
<proteinExistence type="inferred from homology"/>
<name>RS14Z_RUBXD</name>